<dbReference type="EC" id="7.1.1.2"/>
<dbReference type="EMBL" id="AJ277029">
    <property type="protein sequence ID" value="CAB98278.1"/>
    <property type="molecule type" value="Genomic_DNA"/>
</dbReference>
<dbReference type="RefSeq" id="NP_062475.1">
    <property type="nucleotide sequence ID" value="NC_002503.2"/>
</dbReference>
<dbReference type="SMR" id="Q9MES8"/>
<dbReference type="STRING" id="9755.ENSPCTP00005014902"/>
<dbReference type="GeneID" id="809413"/>
<dbReference type="KEGG" id="pcad:809413"/>
<dbReference type="CTD" id="4539"/>
<dbReference type="OrthoDB" id="6146597at2759"/>
<dbReference type="Proteomes" id="UP000248484">
    <property type="component" value="Mitochondrion MT"/>
</dbReference>
<dbReference type="GO" id="GO:0005743">
    <property type="term" value="C:mitochondrial inner membrane"/>
    <property type="evidence" value="ECO:0000250"/>
    <property type="project" value="UniProtKB"/>
</dbReference>
<dbReference type="GO" id="GO:0045271">
    <property type="term" value="C:respiratory chain complex I"/>
    <property type="evidence" value="ECO:0000250"/>
    <property type="project" value="UniProtKB"/>
</dbReference>
<dbReference type="GO" id="GO:0008137">
    <property type="term" value="F:NADH dehydrogenase (ubiquinone) activity"/>
    <property type="evidence" value="ECO:0000250"/>
    <property type="project" value="UniProtKB"/>
</dbReference>
<dbReference type="GO" id="GO:0042773">
    <property type="term" value="P:ATP synthesis coupled electron transport"/>
    <property type="evidence" value="ECO:0007669"/>
    <property type="project" value="InterPro"/>
</dbReference>
<dbReference type="FunFam" id="1.10.287.3510:FF:000002">
    <property type="entry name" value="NADH-ubiquinone oxidoreductase chain 4L"/>
    <property type="match status" value="1"/>
</dbReference>
<dbReference type="Gene3D" id="1.10.287.3510">
    <property type="match status" value="1"/>
</dbReference>
<dbReference type="InterPro" id="IPR001133">
    <property type="entry name" value="NADH_UbQ_OxRdtase_chain4L/K"/>
</dbReference>
<dbReference type="InterPro" id="IPR039428">
    <property type="entry name" value="NUOK/Mnh_C1-like"/>
</dbReference>
<dbReference type="PANTHER" id="PTHR11434:SF0">
    <property type="entry name" value="NADH-UBIQUINONE OXIDOREDUCTASE CHAIN 4L"/>
    <property type="match status" value="1"/>
</dbReference>
<dbReference type="PANTHER" id="PTHR11434">
    <property type="entry name" value="NADH-UBIQUINONE OXIDOREDUCTASE SUBUNIT ND4L"/>
    <property type="match status" value="1"/>
</dbReference>
<dbReference type="Pfam" id="PF00420">
    <property type="entry name" value="Oxidored_q2"/>
    <property type="match status" value="1"/>
</dbReference>
<protein>
    <recommendedName>
        <fullName>NADH-ubiquinone oxidoreductase chain 4L</fullName>
        <ecNumber>7.1.1.2</ecNumber>
    </recommendedName>
    <alternativeName>
        <fullName>NADH dehydrogenase subunit 4L</fullName>
    </alternativeName>
</protein>
<comment type="function">
    <text evidence="1">Core subunit of the mitochondrial membrane respiratory chain NADH dehydrogenase (Complex I) which catalyzes electron transfer from NADH through the respiratory chain, using ubiquinone as an electron acceptor. Part of the enzyme membrane arm which is embedded in the lipid bilayer and involved in proton translocation.</text>
</comment>
<comment type="catalytic activity">
    <reaction evidence="1">
        <text>a ubiquinone + NADH + 5 H(+)(in) = a ubiquinol + NAD(+) + 4 H(+)(out)</text>
        <dbReference type="Rhea" id="RHEA:29091"/>
        <dbReference type="Rhea" id="RHEA-COMP:9565"/>
        <dbReference type="Rhea" id="RHEA-COMP:9566"/>
        <dbReference type="ChEBI" id="CHEBI:15378"/>
        <dbReference type="ChEBI" id="CHEBI:16389"/>
        <dbReference type="ChEBI" id="CHEBI:17976"/>
        <dbReference type="ChEBI" id="CHEBI:57540"/>
        <dbReference type="ChEBI" id="CHEBI:57945"/>
        <dbReference type="EC" id="7.1.1.2"/>
    </reaction>
    <physiologicalReaction direction="left-to-right" evidence="1">
        <dbReference type="Rhea" id="RHEA:29092"/>
    </physiologicalReaction>
</comment>
<comment type="subunit">
    <text evidence="2">Core subunit of respiratory chain NADH dehydrogenase (Complex I) which is composed of 45 different subunits.</text>
</comment>
<comment type="subcellular location">
    <subcellularLocation>
        <location evidence="2">Mitochondrion inner membrane</location>
        <topology evidence="3">Multi-pass membrane protein</topology>
    </subcellularLocation>
</comment>
<comment type="similarity">
    <text evidence="4">Belongs to the complex I subunit 4L family.</text>
</comment>
<evidence type="ECO:0000250" key="1">
    <source>
        <dbReference type="UniProtKB" id="P03901"/>
    </source>
</evidence>
<evidence type="ECO:0000250" key="2">
    <source>
        <dbReference type="UniProtKB" id="P03902"/>
    </source>
</evidence>
<evidence type="ECO:0000255" key="3"/>
<evidence type="ECO:0000305" key="4"/>
<geneLocation type="mitochondrion"/>
<organism>
    <name type="scientific">Physeter macrocephalus</name>
    <name type="common">Sperm whale</name>
    <name type="synonym">Physeter catodon</name>
    <dbReference type="NCBI Taxonomy" id="9755"/>
    <lineage>
        <taxon>Eukaryota</taxon>
        <taxon>Metazoa</taxon>
        <taxon>Chordata</taxon>
        <taxon>Craniata</taxon>
        <taxon>Vertebrata</taxon>
        <taxon>Euteleostomi</taxon>
        <taxon>Mammalia</taxon>
        <taxon>Eutheria</taxon>
        <taxon>Laurasiatheria</taxon>
        <taxon>Artiodactyla</taxon>
        <taxon>Whippomorpha</taxon>
        <taxon>Cetacea</taxon>
        <taxon>Odontoceti</taxon>
        <taxon>Physeteridae</taxon>
        <taxon>Physeter</taxon>
    </lineage>
</organism>
<accession>Q9MES8</accession>
<gene>
    <name type="primary">MT-ND4L</name>
    <name type="synonym">MTND4L</name>
    <name type="synonym">NADH4L</name>
    <name type="synonym">ND4L</name>
</gene>
<reference key="1">
    <citation type="journal article" date="2000" name="J. Mol. Evol.">
        <title>The mitochondrial genome of the sperm whale and a new molecular reference for estimating eutherian divergence dates.</title>
        <authorList>
            <person name="Arnason U."/>
            <person name="Gullberg A."/>
            <person name="Gretarsdottir S."/>
            <person name="Ursing B."/>
            <person name="Janke A."/>
        </authorList>
    </citation>
    <scope>NUCLEOTIDE SEQUENCE [GENOMIC DNA]</scope>
</reference>
<feature type="chain" id="PRO_0000275100" description="NADH-ubiquinone oxidoreductase chain 4L">
    <location>
        <begin position="1"/>
        <end position="98"/>
    </location>
</feature>
<feature type="transmembrane region" description="Helical" evidence="3">
    <location>
        <begin position="1"/>
        <end position="21"/>
    </location>
</feature>
<feature type="transmembrane region" description="Helical" evidence="3">
    <location>
        <begin position="26"/>
        <end position="46"/>
    </location>
</feature>
<feature type="transmembrane region" description="Helical" evidence="3">
    <location>
        <begin position="61"/>
        <end position="81"/>
    </location>
</feature>
<keyword id="KW-0249">Electron transport</keyword>
<keyword id="KW-0472">Membrane</keyword>
<keyword id="KW-0496">Mitochondrion</keyword>
<keyword id="KW-0999">Mitochondrion inner membrane</keyword>
<keyword id="KW-0520">NAD</keyword>
<keyword id="KW-1185">Reference proteome</keyword>
<keyword id="KW-0679">Respiratory chain</keyword>
<keyword id="KW-1278">Translocase</keyword>
<keyword id="KW-0812">Transmembrane</keyword>
<keyword id="KW-1133">Transmembrane helix</keyword>
<keyword id="KW-0813">Transport</keyword>
<keyword id="KW-0830">Ubiquinone</keyword>
<proteinExistence type="inferred from homology"/>
<sequence>MSLIHMNVMMAFSMSLVGLLMYRSHLMSALLCLEGMALSLFIFTTLTTLNLHFTLANMAPIILLVFTACEAAIGLALLVMISNTYGTDYVQSLNLLQC</sequence>
<name>NU4LM_PHYMC</name>